<keyword id="KW-0963">Cytoplasm</keyword>
<keyword id="KW-0444">Lipid biosynthesis</keyword>
<keyword id="KW-0443">Lipid metabolism</keyword>
<keyword id="KW-0594">Phospholipid biosynthesis</keyword>
<keyword id="KW-1208">Phospholipid metabolism</keyword>
<keyword id="KW-0808">Transferase</keyword>
<organism>
    <name type="scientific">Clostridium perfringens (strain SM101 / Type A)</name>
    <dbReference type="NCBI Taxonomy" id="289380"/>
    <lineage>
        <taxon>Bacteria</taxon>
        <taxon>Bacillati</taxon>
        <taxon>Bacillota</taxon>
        <taxon>Clostridia</taxon>
        <taxon>Eubacteriales</taxon>
        <taxon>Clostridiaceae</taxon>
        <taxon>Clostridium</taxon>
    </lineage>
</organism>
<dbReference type="EC" id="2.3.1.274" evidence="1"/>
<dbReference type="EMBL" id="CP000312">
    <property type="protein sequence ID" value="ABG87442.1"/>
    <property type="molecule type" value="Genomic_DNA"/>
</dbReference>
<dbReference type="RefSeq" id="WP_011592612.1">
    <property type="nucleotide sequence ID" value="NC_008262.1"/>
</dbReference>
<dbReference type="SMR" id="Q0SSA0"/>
<dbReference type="KEGG" id="cpr:CPR_1692"/>
<dbReference type="UniPathway" id="UPA00085"/>
<dbReference type="Proteomes" id="UP000001824">
    <property type="component" value="Chromosome"/>
</dbReference>
<dbReference type="GO" id="GO:0005737">
    <property type="term" value="C:cytoplasm"/>
    <property type="evidence" value="ECO:0007669"/>
    <property type="project" value="UniProtKB-SubCell"/>
</dbReference>
<dbReference type="GO" id="GO:0043811">
    <property type="term" value="F:phosphate:acyl-[acyl carrier protein] acyltransferase activity"/>
    <property type="evidence" value="ECO:0007669"/>
    <property type="project" value="UniProtKB-UniRule"/>
</dbReference>
<dbReference type="GO" id="GO:0006633">
    <property type="term" value="P:fatty acid biosynthetic process"/>
    <property type="evidence" value="ECO:0007669"/>
    <property type="project" value="UniProtKB-UniRule"/>
</dbReference>
<dbReference type="GO" id="GO:0008654">
    <property type="term" value="P:phospholipid biosynthetic process"/>
    <property type="evidence" value="ECO:0007669"/>
    <property type="project" value="UniProtKB-KW"/>
</dbReference>
<dbReference type="Gene3D" id="3.40.718.10">
    <property type="entry name" value="Isopropylmalate Dehydrogenase"/>
    <property type="match status" value="1"/>
</dbReference>
<dbReference type="HAMAP" id="MF_00019">
    <property type="entry name" value="PlsX"/>
    <property type="match status" value="1"/>
</dbReference>
<dbReference type="InterPro" id="IPR003664">
    <property type="entry name" value="FA_synthesis"/>
</dbReference>
<dbReference type="InterPro" id="IPR012281">
    <property type="entry name" value="Phospholipid_synth_PlsX-like"/>
</dbReference>
<dbReference type="NCBIfam" id="TIGR00182">
    <property type="entry name" value="plsX"/>
    <property type="match status" value="1"/>
</dbReference>
<dbReference type="PANTHER" id="PTHR30100">
    <property type="entry name" value="FATTY ACID/PHOSPHOLIPID SYNTHESIS PROTEIN PLSX"/>
    <property type="match status" value="1"/>
</dbReference>
<dbReference type="PANTHER" id="PTHR30100:SF1">
    <property type="entry name" value="PHOSPHATE ACYLTRANSFERASE"/>
    <property type="match status" value="1"/>
</dbReference>
<dbReference type="Pfam" id="PF02504">
    <property type="entry name" value="FA_synthesis"/>
    <property type="match status" value="1"/>
</dbReference>
<dbReference type="PIRSF" id="PIRSF002465">
    <property type="entry name" value="Phsphlp_syn_PlsX"/>
    <property type="match status" value="1"/>
</dbReference>
<dbReference type="SUPFAM" id="SSF53659">
    <property type="entry name" value="Isocitrate/Isopropylmalate dehydrogenase-like"/>
    <property type="match status" value="1"/>
</dbReference>
<proteinExistence type="inferred from homology"/>
<evidence type="ECO:0000255" key="1">
    <source>
        <dbReference type="HAMAP-Rule" id="MF_00019"/>
    </source>
</evidence>
<reference key="1">
    <citation type="journal article" date="2006" name="Genome Res.">
        <title>Skewed genomic variability in strains of the toxigenic bacterial pathogen, Clostridium perfringens.</title>
        <authorList>
            <person name="Myers G.S.A."/>
            <person name="Rasko D.A."/>
            <person name="Cheung J.K."/>
            <person name="Ravel J."/>
            <person name="Seshadri R."/>
            <person name="DeBoy R.T."/>
            <person name="Ren Q."/>
            <person name="Varga J."/>
            <person name="Awad M.M."/>
            <person name="Brinkac L.M."/>
            <person name="Daugherty S.C."/>
            <person name="Haft D.H."/>
            <person name="Dodson R.J."/>
            <person name="Madupu R."/>
            <person name="Nelson W.C."/>
            <person name="Rosovitz M.J."/>
            <person name="Sullivan S.A."/>
            <person name="Khouri H."/>
            <person name="Dimitrov G.I."/>
            <person name="Watkins K.L."/>
            <person name="Mulligan S."/>
            <person name="Benton J."/>
            <person name="Radune D."/>
            <person name="Fisher D.J."/>
            <person name="Atkins H.S."/>
            <person name="Hiscox T."/>
            <person name="Jost B.H."/>
            <person name="Billington S.J."/>
            <person name="Songer J.G."/>
            <person name="McClane B.A."/>
            <person name="Titball R.W."/>
            <person name="Rood J.I."/>
            <person name="Melville S.B."/>
            <person name="Paulsen I.T."/>
        </authorList>
    </citation>
    <scope>NUCLEOTIDE SEQUENCE [LARGE SCALE GENOMIC DNA]</scope>
    <source>
        <strain>SM101 / Type A</strain>
    </source>
</reference>
<feature type="chain" id="PRO_1000001751" description="Phosphate acyltransferase">
    <location>
        <begin position="1"/>
        <end position="339"/>
    </location>
</feature>
<protein>
    <recommendedName>
        <fullName evidence="1">Phosphate acyltransferase</fullName>
        <ecNumber evidence="1">2.3.1.274</ecNumber>
    </recommendedName>
    <alternativeName>
        <fullName evidence="1">Acyl-ACP phosphotransacylase</fullName>
    </alternativeName>
    <alternativeName>
        <fullName evidence="1">Acyl-[acyl-carrier-protein]--phosphate acyltransferase</fullName>
    </alternativeName>
    <alternativeName>
        <fullName evidence="1">Phosphate-acyl-ACP acyltransferase</fullName>
    </alternativeName>
</protein>
<comment type="function">
    <text evidence="1">Catalyzes the reversible formation of acyl-phosphate (acyl-PO(4)) from acyl-[acyl-carrier-protein] (acyl-ACP). This enzyme utilizes acyl-ACP as fatty acyl donor, but not acyl-CoA.</text>
</comment>
<comment type="catalytic activity">
    <reaction evidence="1">
        <text>a fatty acyl-[ACP] + phosphate = an acyl phosphate + holo-[ACP]</text>
        <dbReference type="Rhea" id="RHEA:42292"/>
        <dbReference type="Rhea" id="RHEA-COMP:9685"/>
        <dbReference type="Rhea" id="RHEA-COMP:14125"/>
        <dbReference type="ChEBI" id="CHEBI:43474"/>
        <dbReference type="ChEBI" id="CHEBI:59918"/>
        <dbReference type="ChEBI" id="CHEBI:64479"/>
        <dbReference type="ChEBI" id="CHEBI:138651"/>
        <dbReference type="EC" id="2.3.1.274"/>
    </reaction>
</comment>
<comment type="pathway">
    <text evidence="1">Lipid metabolism; phospholipid metabolism.</text>
</comment>
<comment type="subunit">
    <text evidence="1">Homodimer. Probably interacts with PlsY.</text>
</comment>
<comment type="subcellular location">
    <subcellularLocation>
        <location evidence="1">Cytoplasm</location>
    </subcellularLocation>
    <text evidence="1">Associated with the membrane possibly through PlsY.</text>
</comment>
<comment type="similarity">
    <text evidence="1">Belongs to the PlsX family.</text>
</comment>
<sequence length="339" mass="37003">MRIAVDGMGGDHSPSAVVEGCVQALEEFKDIEIYITGPEDLLKEAFSKFKYDKERVIFIDAKEVISTNEHPAMAVKKKKDSSLVKALRLVKDNQCEAVISAGSTGAFLTGCTLIVGRIKGVERPALAPVMPGKNGPFMIIDAGANVDSKPSYLVQFAKMGEVYFKSVMDVNNPKVGLVNIGEEEEKGNDLTKATYKLLKEEKDINFIGNVEPREVSTGDVDVLVCDGFVGNTVLKMYEGVASTILSMIKSEVKSSFLAKLGVPFLAPALMNLKKKMDYKEYGGAPFLGVKGICVKAHGSSDAKAFKNAIRQARKFHENDLIGKLSEEITKKSFDNQKKF</sequence>
<name>PLSX_CLOPS</name>
<accession>Q0SSA0</accession>
<gene>
    <name evidence="1" type="primary">plsX</name>
    <name type="ordered locus">CPR_1692</name>
</gene>